<organism>
    <name type="scientific">Tityus costatus</name>
    <name type="common">Brazilian scorpion</name>
    <dbReference type="NCBI Taxonomy" id="309814"/>
    <lineage>
        <taxon>Eukaryota</taxon>
        <taxon>Metazoa</taxon>
        <taxon>Ecdysozoa</taxon>
        <taxon>Arthropoda</taxon>
        <taxon>Chelicerata</taxon>
        <taxon>Arachnida</taxon>
        <taxon>Scorpiones</taxon>
        <taxon>Buthida</taxon>
        <taxon>Buthoidea</taxon>
        <taxon>Buthidae</taxon>
        <taxon>Tityus</taxon>
    </lineage>
</organism>
<proteinExistence type="evidence at protein level"/>
<sequence>KIKSGWERLTSESEYACPAIDKFCEDHCAAKKAVGKCDDFKCNCIKL</sequence>
<protein>
    <recommendedName>
        <fullName evidence="6">Potassium channel toxin TcoKIK</fullName>
    </recommendedName>
</protein>
<reference key="1">
    <citation type="journal article" date="2007" name="Peptides">
        <title>Wide phylogenetic distribution of scorpine and long-chain beta-KTx-like peptides in scorpion venoms: identification of 'orphan' components.</title>
        <authorList>
            <person name="Diego-Garcia E."/>
            <person name="Schwartz E.F."/>
            <person name="D'Suze G."/>
            <person name="Gonzalez S.A."/>
            <person name="Batista C.V."/>
            <person name="Garcia B.I."/>
            <person name="Rodriguez de la Vega R.C."/>
            <person name="Possani L.D."/>
        </authorList>
    </citation>
    <scope>NUCLEOTIDE SEQUENCE [MRNA]</scope>
    <scope>PROTEIN SEQUENCE OF 1-29</scope>
    <scope>SUBCELLULAR LOCATION</scope>
    <source>
        <tissue>Venom gland</tissue>
    </source>
</reference>
<reference key="2">
    <citation type="journal article" date="2005" name="Toxicon">
        <title>The Brazilian scorpion Tityus costatus Karsch: genes, peptides and function.</title>
        <authorList>
            <person name="Diego-Garcia E."/>
            <person name="Batista C.V.F."/>
            <person name="Garcia-Gomez B.I."/>
            <person name="Lucas S."/>
            <person name="Candido D.M."/>
            <person name="Gomez-Lagunas F."/>
            <person name="Possani L.D."/>
        </authorList>
    </citation>
    <scope>MASS SPECTROMETRY</scope>
    <scope>SUBCELLULAR LOCATION</scope>
    <source>
        <tissue>Venom</tissue>
    </source>
</reference>
<reference evidence="11" key="3">
    <citation type="journal article" date="2023" name="Biochim. Biophys. Acta">
        <title>Beta-KTx14.3, a scorpion toxin, blocks the human potassium channel KCNQ1.</title>
        <authorList>
            <person name="Titaux-Delgado G."/>
            <person name="Lopez-Giraldo A.E."/>
            <person name="Carrillo E."/>
            <person name="Cofas-Vargas L.F."/>
            <person name="Carranza L.E."/>
            <person name="Lopez-Vera E."/>
            <person name="Garcia-Hernandez E."/>
            <person name="Del Rio-Portilla F."/>
        </authorList>
    </citation>
    <scope>STRUCTURE BY NMR</scope>
    <scope>FUNCTION</scope>
    <scope>DISULFIDE BONDS</scope>
    <scope>RECOMBINANT EXPRESSION</scope>
</reference>
<accession>Q0GY42</accession>
<feature type="chain" id="PRO_0000274683" description="Potassium channel toxin TcoKIK" evidence="3 4">
    <location>
        <begin position="1"/>
        <end position="47"/>
    </location>
</feature>
<feature type="domain" description="BetaSPN-type CS-alpha/beta" evidence="2">
    <location>
        <begin position="14"/>
        <end position="47"/>
    </location>
</feature>
<feature type="disulfide bond" evidence="5 12">
    <location>
        <begin position="17"/>
        <end position="37"/>
    </location>
</feature>
<feature type="disulfide bond" evidence="5 12">
    <location>
        <begin position="24"/>
        <end position="42"/>
    </location>
</feature>
<feature type="disulfide bond" evidence="5 12">
    <location>
        <begin position="28"/>
        <end position="44"/>
    </location>
</feature>
<feature type="strand" evidence="13">
    <location>
        <begin position="3"/>
        <end position="5"/>
    </location>
</feature>
<feature type="helix" evidence="13">
    <location>
        <begin position="12"/>
        <end position="14"/>
    </location>
</feature>
<feature type="helix" evidence="13">
    <location>
        <begin position="22"/>
        <end position="29"/>
    </location>
</feature>
<feature type="turn" evidence="13">
    <location>
        <begin position="30"/>
        <end position="32"/>
    </location>
</feature>
<feature type="strand" evidence="13">
    <location>
        <begin position="35"/>
        <end position="37"/>
    </location>
</feature>
<feature type="strand" evidence="13">
    <location>
        <begin position="42"/>
        <end position="44"/>
    </location>
</feature>
<comment type="function">
    <text evidence="1 5">Blocks voltage-gated potassium channels (By similarity). Its application (10 uM) to cells recombinantly expressing channels results in membrane damage and cell lysis (PubMed:36918120).</text>
</comment>
<comment type="subcellular location">
    <subcellularLocation>
        <location evidence="3 4">Secreted</location>
    </subcellularLocation>
    <subcellularLocation>
        <location evidence="10">Target cell membrane</location>
    </subcellularLocation>
</comment>
<comment type="tissue specificity">
    <text evidence="8 9">Expressed by the venom gland.</text>
</comment>
<comment type="domain">
    <text evidence="7">Contains 2 domains: a N-terminal domain that is unstructured or forms an alpha-helix in presence of membranes and a CS-alpha/beta C-terminal domain, which consists of an alpha-helix disulfide-linked to antiparallel beta-sheets.</text>
</comment>
<comment type="mass spectrometry"/>
<comment type="miscellaneous">
    <text evidence="5">Negative results: has no effect on voltage-gated potassium channel Kv7.1/KCNQ1 and Shaker channels (tested at 10 uM).</text>
</comment>
<comment type="similarity">
    <text evidence="7">Belongs to the long chain scorpion toxin family. Class 2 subfamily.</text>
</comment>
<keyword id="KW-0002">3D-structure</keyword>
<keyword id="KW-0903">Direct protein sequencing</keyword>
<keyword id="KW-1015">Disulfide bond</keyword>
<keyword id="KW-0872">Ion channel impairing toxin</keyword>
<keyword id="KW-0472">Membrane</keyword>
<keyword id="KW-0528">Neurotoxin</keyword>
<keyword id="KW-0632">Potassium channel impairing toxin</keyword>
<keyword id="KW-0964">Secreted</keyword>
<keyword id="KW-1052">Target cell membrane</keyword>
<keyword id="KW-1053">Target membrane</keyword>
<keyword id="KW-0800">Toxin</keyword>
<evidence type="ECO:0000250" key="1">
    <source>
        <dbReference type="UniProtKB" id="P86822"/>
    </source>
</evidence>
<evidence type="ECO:0000255" key="2">
    <source>
        <dbReference type="PROSITE-ProRule" id="PRU01209"/>
    </source>
</evidence>
<evidence type="ECO:0000269" key="3">
    <source>
    </source>
</evidence>
<evidence type="ECO:0000269" key="4">
    <source>
    </source>
</evidence>
<evidence type="ECO:0000269" key="5">
    <source>
    </source>
</evidence>
<evidence type="ECO:0000303" key="6">
    <source>
    </source>
</evidence>
<evidence type="ECO:0000305" key="7"/>
<evidence type="ECO:0000305" key="8">
    <source>
    </source>
</evidence>
<evidence type="ECO:0000305" key="9">
    <source>
    </source>
</evidence>
<evidence type="ECO:0000305" key="10">
    <source>
    </source>
</evidence>
<evidence type="ECO:0000312" key="11">
    <source>
        <dbReference type="PDB" id="7LGL"/>
    </source>
</evidence>
<evidence type="ECO:0007744" key="12">
    <source>
        <dbReference type="PDB" id="7LGL"/>
    </source>
</evidence>
<evidence type="ECO:0007829" key="13">
    <source>
        <dbReference type="PDB" id="7LGL"/>
    </source>
</evidence>
<dbReference type="EMBL" id="DQ465349">
    <property type="protein sequence ID" value="ABE98265.1"/>
    <property type="molecule type" value="mRNA"/>
</dbReference>
<dbReference type="PDB" id="7LGL">
    <property type="method" value="NMR"/>
    <property type="chains" value="A=1-47"/>
</dbReference>
<dbReference type="PDBsum" id="7LGL"/>
<dbReference type="SMR" id="Q0GY42"/>
<dbReference type="GO" id="GO:0005576">
    <property type="term" value="C:extracellular region"/>
    <property type="evidence" value="ECO:0007669"/>
    <property type="project" value="UniProtKB-SubCell"/>
</dbReference>
<dbReference type="GO" id="GO:0016020">
    <property type="term" value="C:membrane"/>
    <property type="evidence" value="ECO:0007669"/>
    <property type="project" value="UniProtKB-KW"/>
</dbReference>
<dbReference type="GO" id="GO:0044218">
    <property type="term" value="C:other organism cell membrane"/>
    <property type="evidence" value="ECO:0007669"/>
    <property type="project" value="UniProtKB-KW"/>
</dbReference>
<dbReference type="GO" id="GO:0015459">
    <property type="term" value="F:potassium channel regulator activity"/>
    <property type="evidence" value="ECO:0007669"/>
    <property type="project" value="UniProtKB-KW"/>
</dbReference>
<dbReference type="GO" id="GO:0090729">
    <property type="term" value="F:toxin activity"/>
    <property type="evidence" value="ECO:0007669"/>
    <property type="project" value="UniProtKB-KW"/>
</dbReference>
<dbReference type="InterPro" id="IPR029237">
    <property type="entry name" value="Long_scorpion_toxin_alpha/beta"/>
</dbReference>
<dbReference type="Pfam" id="PF14866">
    <property type="entry name" value="Scorpion_toxin_alpha-beta"/>
    <property type="match status" value="1"/>
</dbReference>
<dbReference type="PROSITE" id="PS51862">
    <property type="entry name" value="BSPN_CSAB"/>
    <property type="match status" value="1"/>
</dbReference>
<name>KBX2_TITCO</name>